<comment type="function">
    <text evidence="1">One of the proteins required for the normal export of preproteins out of the cell cytoplasm. It is a molecular chaperone that binds to a subset of precursor proteins, maintaining them in a translocation-competent state. It also specifically binds to its receptor SecA.</text>
</comment>
<comment type="subunit">
    <text evidence="1">Homotetramer, a dimer of dimers. One homotetramer interacts with 1 SecA dimer.</text>
</comment>
<comment type="subcellular location">
    <subcellularLocation>
        <location evidence="1">Cytoplasm</location>
    </subcellularLocation>
</comment>
<comment type="similarity">
    <text evidence="1">Belongs to the SecB family.</text>
</comment>
<sequence>MAEEQAQPQLALERIYVKDMSLEVPGAGVFTKEWNPELDINLSSNAEKLDDDHYQVVLTVSVTAKNAEEAAFIAEVHQAGIFLLKDIPEDQIGQILGAYCPNVLFPYAREVISDIVTRGSFPQLLLAPVNFDQAFAQSQQQAQVDAEGNA</sequence>
<gene>
    <name evidence="1" type="primary">secB</name>
    <name type="ordered locus">Pcryo_1738</name>
</gene>
<accession>Q1Q9Y8</accession>
<reference key="1">
    <citation type="submission" date="2006-03" db="EMBL/GenBank/DDBJ databases">
        <title>Complete sequence of chromosome of Psychrobacter cryohalolentis K5.</title>
        <authorList>
            <consortium name="US DOE Joint Genome Institute"/>
            <person name="Copeland A."/>
            <person name="Lucas S."/>
            <person name="Lapidus A."/>
            <person name="Barry K."/>
            <person name="Detter J.C."/>
            <person name="Glavina T."/>
            <person name="Hammon N."/>
            <person name="Israni S."/>
            <person name="Dalin E."/>
            <person name="Tice H."/>
            <person name="Pitluck S."/>
            <person name="Brettin T."/>
            <person name="Bruce D."/>
            <person name="Han C."/>
            <person name="Tapia R."/>
            <person name="Sims D.R."/>
            <person name="Gilna P."/>
            <person name="Schmutz J."/>
            <person name="Larimer F."/>
            <person name="Land M."/>
            <person name="Hauser L."/>
            <person name="Kyrpides N."/>
            <person name="Kim E."/>
            <person name="Richardson P."/>
        </authorList>
    </citation>
    <scope>NUCLEOTIDE SEQUENCE [LARGE SCALE GENOMIC DNA]</scope>
    <source>
        <strain>ATCC BAA-1226 / DSM 17306 / VKM B-2378 / K5</strain>
    </source>
</reference>
<dbReference type="EMBL" id="CP000323">
    <property type="protein sequence ID" value="ABE75515.1"/>
    <property type="molecule type" value="Genomic_DNA"/>
</dbReference>
<dbReference type="RefSeq" id="WP_011514062.1">
    <property type="nucleotide sequence ID" value="NC_007969.1"/>
</dbReference>
<dbReference type="SMR" id="Q1Q9Y8"/>
<dbReference type="STRING" id="335284.Pcryo_1738"/>
<dbReference type="KEGG" id="pcr:Pcryo_1738"/>
<dbReference type="eggNOG" id="COG1952">
    <property type="taxonomic scope" value="Bacteria"/>
</dbReference>
<dbReference type="HOGENOM" id="CLU_111574_1_0_6"/>
<dbReference type="Proteomes" id="UP000002425">
    <property type="component" value="Chromosome"/>
</dbReference>
<dbReference type="GO" id="GO:0005737">
    <property type="term" value="C:cytoplasm"/>
    <property type="evidence" value="ECO:0007669"/>
    <property type="project" value="UniProtKB-SubCell"/>
</dbReference>
<dbReference type="GO" id="GO:0051082">
    <property type="term" value="F:unfolded protein binding"/>
    <property type="evidence" value="ECO:0007669"/>
    <property type="project" value="InterPro"/>
</dbReference>
<dbReference type="GO" id="GO:0006457">
    <property type="term" value="P:protein folding"/>
    <property type="evidence" value="ECO:0007669"/>
    <property type="project" value="UniProtKB-UniRule"/>
</dbReference>
<dbReference type="GO" id="GO:0051262">
    <property type="term" value="P:protein tetramerization"/>
    <property type="evidence" value="ECO:0007669"/>
    <property type="project" value="InterPro"/>
</dbReference>
<dbReference type="GO" id="GO:0015031">
    <property type="term" value="P:protein transport"/>
    <property type="evidence" value="ECO:0007669"/>
    <property type="project" value="UniProtKB-UniRule"/>
</dbReference>
<dbReference type="Gene3D" id="3.10.420.10">
    <property type="entry name" value="SecB-like"/>
    <property type="match status" value="1"/>
</dbReference>
<dbReference type="HAMAP" id="MF_00821">
    <property type="entry name" value="SecB"/>
    <property type="match status" value="1"/>
</dbReference>
<dbReference type="InterPro" id="IPR003708">
    <property type="entry name" value="SecB"/>
</dbReference>
<dbReference type="InterPro" id="IPR035958">
    <property type="entry name" value="SecB-like_sf"/>
</dbReference>
<dbReference type="NCBIfam" id="NF004393">
    <property type="entry name" value="PRK05751.1-4"/>
    <property type="match status" value="1"/>
</dbReference>
<dbReference type="NCBIfam" id="TIGR00809">
    <property type="entry name" value="secB"/>
    <property type="match status" value="1"/>
</dbReference>
<dbReference type="PANTHER" id="PTHR36918">
    <property type="match status" value="1"/>
</dbReference>
<dbReference type="PANTHER" id="PTHR36918:SF1">
    <property type="entry name" value="PROTEIN-EXPORT PROTEIN SECB"/>
    <property type="match status" value="1"/>
</dbReference>
<dbReference type="Pfam" id="PF02556">
    <property type="entry name" value="SecB"/>
    <property type="match status" value="1"/>
</dbReference>
<dbReference type="PRINTS" id="PR01594">
    <property type="entry name" value="SECBCHAPRONE"/>
</dbReference>
<dbReference type="SUPFAM" id="SSF54611">
    <property type="entry name" value="SecB-like"/>
    <property type="match status" value="1"/>
</dbReference>
<evidence type="ECO:0000255" key="1">
    <source>
        <dbReference type="HAMAP-Rule" id="MF_00821"/>
    </source>
</evidence>
<organism>
    <name type="scientific">Psychrobacter cryohalolentis (strain ATCC BAA-1226 / DSM 17306 / VKM B-2378 / K5)</name>
    <dbReference type="NCBI Taxonomy" id="335284"/>
    <lineage>
        <taxon>Bacteria</taxon>
        <taxon>Pseudomonadati</taxon>
        <taxon>Pseudomonadota</taxon>
        <taxon>Gammaproteobacteria</taxon>
        <taxon>Moraxellales</taxon>
        <taxon>Moraxellaceae</taxon>
        <taxon>Psychrobacter</taxon>
    </lineage>
</organism>
<proteinExistence type="inferred from homology"/>
<name>SECB_PSYCK</name>
<protein>
    <recommendedName>
        <fullName evidence="1">Protein-export protein SecB</fullName>
    </recommendedName>
</protein>
<feature type="chain" id="PRO_1000062498" description="Protein-export protein SecB">
    <location>
        <begin position="1"/>
        <end position="150"/>
    </location>
</feature>
<keyword id="KW-0143">Chaperone</keyword>
<keyword id="KW-0963">Cytoplasm</keyword>
<keyword id="KW-0653">Protein transport</keyword>
<keyword id="KW-0811">Translocation</keyword>
<keyword id="KW-0813">Transport</keyword>